<sequence>MTILTTLIKEDNHFQDLNQVFGQANTLVTGLSPSAKVTMIAEKYAQSNQQLLLITNNLYQADKLETDLLQFVDVEELYKYPVQDIMTEEFSTQSPQLMSERIRTLTALAQGKKGLFIVPLNGLKKWLTPVEMWQNHQMTLRVGEDIDVDQFLNKLVNMGYKRESVVSHIGEFSLRGGIIDIFPLIGEPIRIELFDTEIDSIRDFDVETQRSKDNIEEVDITTASDYIITEEVISHLKEELKTAYENTRPKIDKSVRNDLKETYESFKLFESTYFDHQILRRLVAFMYETPSTIIDYFQKDAIIAVDEFNRIKETEESLTVESDSFISNVIESGNGFIGQSFIKYDDFETLIEGYPVTYFSLFATTMPIKLNHIIKFSCKPVQQFYGQYDIMRSEFQRYVNQNYHIVVLVETETKVERMQAMLSEMHIPSITKLHRSMSSGQAVIIEGSLSEGFELPDMGLVVITERELFKSKQKKQRKRTKAISNAEKIKSYQDLNVGDYIVHVHHGVGRYLGVETLEVGQIHRDYIKLQYKGTDQLFVPVDQMDQVQKYVASEDKTPKLNKLGGSEWKKTKAKVQQSVEDIAEELIDLYKEREMAEGYQYGEDTAEQTTFELDFPYELTPDQAKSIDEIKDDMQKSRPMDRLLCGDVGYGKTEVAVRAAFKAVMEGKQVAFLVPTTILAQQHYETLIERMQDFPVEIQLMSRFRTPKEIKQTKEGLKTGFVDIVVGTHKLLSKDIQYKDLGLLIVDEEQRFGVRHKERIKTLKHNVDVLTLTATPIPRTLHMSMLGVRDLSVIETPPENRFPVQTYVLEQNMSFIKEALERELSRDGQVFYLYNKVQSIYEKREQLQMLMPDANIAVAHGQMTERDLEETMLSFINNEYDILVTTTIIETGVDVPNANTLIIEDADRFGLSQLYQLRGRVGRSSRIGYAYFLHPANKVLTETAEDRLQAIKEFTELGSGFKIAMRDLNIRGAGNLLGKQQHGFIDTVGFDLYSQMLEEAVNEKRGIKEPESEVPEVEVDLNLDAYLPTEYIANEQAKIEIYKKLRKTETFDQIIDIKDELIDRFNDYPVEVARLLDIVEIKVHALHSGITLIKDKGKIIDIHLSVKATENIDGEVLFKATQPLGRTMKVGVQNNAMTITLTKQNQWLDSLKFLVKCIEESMRISDEA</sequence>
<name>MFD_STAAR</name>
<gene>
    <name evidence="1" type="primary">mfd</name>
    <name type="ordered locus">SAR0504</name>
</gene>
<organism>
    <name type="scientific">Staphylococcus aureus (strain MRSA252)</name>
    <dbReference type="NCBI Taxonomy" id="282458"/>
    <lineage>
        <taxon>Bacteria</taxon>
        <taxon>Bacillati</taxon>
        <taxon>Bacillota</taxon>
        <taxon>Bacilli</taxon>
        <taxon>Bacillales</taxon>
        <taxon>Staphylococcaceae</taxon>
        <taxon>Staphylococcus</taxon>
    </lineage>
</organism>
<proteinExistence type="inferred from homology"/>
<dbReference type="EC" id="3.6.4.-" evidence="1"/>
<dbReference type="EMBL" id="BX571856">
    <property type="protein sequence ID" value="CAG39526.1"/>
    <property type="molecule type" value="Genomic_DNA"/>
</dbReference>
<dbReference type="RefSeq" id="WP_000154245.1">
    <property type="nucleotide sequence ID" value="NC_002952.2"/>
</dbReference>
<dbReference type="SMR" id="Q6GJG8"/>
<dbReference type="KEGG" id="sar:SAR0504"/>
<dbReference type="HOGENOM" id="CLU_005122_1_3_9"/>
<dbReference type="Proteomes" id="UP000000596">
    <property type="component" value="Chromosome"/>
</dbReference>
<dbReference type="GO" id="GO:0005737">
    <property type="term" value="C:cytoplasm"/>
    <property type="evidence" value="ECO:0007669"/>
    <property type="project" value="UniProtKB-SubCell"/>
</dbReference>
<dbReference type="GO" id="GO:0005524">
    <property type="term" value="F:ATP binding"/>
    <property type="evidence" value="ECO:0007669"/>
    <property type="project" value="UniProtKB-UniRule"/>
</dbReference>
<dbReference type="GO" id="GO:0003684">
    <property type="term" value="F:damaged DNA binding"/>
    <property type="evidence" value="ECO:0007669"/>
    <property type="project" value="InterPro"/>
</dbReference>
<dbReference type="GO" id="GO:0003678">
    <property type="term" value="F:DNA helicase activity"/>
    <property type="evidence" value="ECO:0007669"/>
    <property type="project" value="TreeGrafter"/>
</dbReference>
<dbReference type="GO" id="GO:0016787">
    <property type="term" value="F:hydrolase activity"/>
    <property type="evidence" value="ECO:0007669"/>
    <property type="project" value="UniProtKB-KW"/>
</dbReference>
<dbReference type="GO" id="GO:0006355">
    <property type="term" value="P:regulation of DNA-templated transcription"/>
    <property type="evidence" value="ECO:0007669"/>
    <property type="project" value="UniProtKB-UniRule"/>
</dbReference>
<dbReference type="GO" id="GO:0000716">
    <property type="term" value="P:transcription-coupled nucleotide-excision repair, DNA damage recognition"/>
    <property type="evidence" value="ECO:0007669"/>
    <property type="project" value="UniProtKB-UniRule"/>
</dbReference>
<dbReference type="CDD" id="cd17991">
    <property type="entry name" value="DEXHc_TRCF"/>
    <property type="match status" value="1"/>
</dbReference>
<dbReference type="FunFam" id="3.40.50.300:FF:000546">
    <property type="entry name" value="Transcription-repair-coupling factor"/>
    <property type="match status" value="1"/>
</dbReference>
<dbReference type="Gene3D" id="2.40.10.170">
    <property type="match status" value="1"/>
</dbReference>
<dbReference type="Gene3D" id="3.40.50.11140">
    <property type="match status" value="1"/>
</dbReference>
<dbReference type="Gene3D" id="3.40.50.11180">
    <property type="match status" value="1"/>
</dbReference>
<dbReference type="Gene3D" id="3.40.50.300">
    <property type="entry name" value="P-loop containing nucleotide triphosphate hydrolases"/>
    <property type="match status" value="2"/>
</dbReference>
<dbReference type="Gene3D" id="3.30.2060.10">
    <property type="entry name" value="Penicillin-binding protein 1b domain"/>
    <property type="match status" value="1"/>
</dbReference>
<dbReference type="Gene3D" id="3.90.1150.50">
    <property type="entry name" value="Transcription-repair-coupling factor, D7 domain"/>
    <property type="match status" value="1"/>
</dbReference>
<dbReference type="HAMAP" id="MF_00969">
    <property type="entry name" value="TRCF"/>
    <property type="match status" value="1"/>
</dbReference>
<dbReference type="InterPro" id="IPR003711">
    <property type="entry name" value="CarD-like/TRCF_RID"/>
</dbReference>
<dbReference type="InterPro" id="IPR036101">
    <property type="entry name" value="CarD-like/TRCF_RID_sf"/>
</dbReference>
<dbReference type="InterPro" id="IPR011545">
    <property type="entry name" value="DEAD/DEAH_box_helicase_dom"/>
</dbReference>
<dbReference type="InterPro" id="IPR014001">
    <property type="entry name" value="Helicase_ATP-bd"/>
</dbReference>
<dbReference type="InterPro" id="IPR001650">
    <property type="entry name" value="Helicase_C-like"/>
</dbReference>
<dbReference type="InterPro" id="IPR004576">
    <property type="entry name" value="Mfd"/>
</dbReference>
<dbReference type="InterPro" id="IPR048635">
    <property type="entry name" value="MFD_D3"/>
</dbReference>
<dbReference type="InterPro" id="IPR027417">
    <property type="entry name" value="P-loop_NTPase"/>
</dbReference>
<dbReference type="InterPro" id="IPR047112">
    <property type="entry name" value="RecG/Mfd"/>
</dbReference>
<dbReference type="InterPro" id="IPR037235">
    <property type="entry name" value="TRCF-like_C_D7"/>
</dbReference>
<dbReference type="InterPro" id="IPR005118">
    <property type="entry name" value="TRCF_C"/>
</dbReference>
<dbReference type="InterPro" id="IPR041471">
    <property type="entry name" value="UvrB_inter"/>
</dbReference>
<dbReference type="NCBIfam" id="TIGR00580">
    <property type="entry name" value="mfd"/>
    <property type="match status" value="1"/>
</dbReference>
<dbReference type="PANTHER" id="PTHR47964">
    <property type="entry name" value="ATP-DEPENDENT DNA HELICASE HOMOLOG RECG, CHLOROPLASTIC"/>
    <property type="match status" value="1"/>
</dbReference>
<dbReference type="PANTHER" id="PTHR47964:SF1">
    <property type="entry name" value="ATP-DEPENDENT DNA HELICASE HOMOLOG RECG, CHLOROPLASTIC"/>
    <property type="match status" value="1"/>
</dbReference>
<dbReference type="Pfam" id="PF02559">
    <property type="entry name" value="CarD_TRCF_RID"/>
    <property type="match status" value="1"/>
</dbReference>
<dbReference type="Pfam" id="PF00270">
    <property type="entry name" value="DEAD"/>
    <property type="match status" value="1"/>
</dbReference>
<dbReference type="Pfam" id="PF00271">
    <property type="entry name" value="Helicase_C"/>
    <property type="match status" value="1"/>
</dbReference>
<dbReference type="Pfam" id="PF21132">
    <property type="entry name" value="MFD_D3"/>
    <property type="match status" value="1"/>
</dbReference>
<dbReference type="Pfam" id="PF03461">
    <property type="entry name" value="TRCF"/>
    <property type="match status" value="1"/>
</dbReference>
<dbReference type="Pfam" id="PF17757">
    <property type="entry name" value="UvrB_inter"/>
    <property type="match status" value="1"/>
</dbReference>
<dbReference type="SMART" id="SM01058">
    <property type="entry name" value="CarD_TRCF"/>
    <property type="match status" value="1"/>
</dbReference>
<dbReference type="SMART" id="SM00487">
    <property type="entry name" value="DEXDc"/>
    <property type="match status" value="1"/>
</dbReference>
<dbReference type="SMART" id="SM00490">
    <property type="entry name" value="HELICc"/>
    <property type="match status" value="1"/>
</dbReference>
<dbReference type="SMART" id="SM00982">
    <property type="entry name" value="TRCF"/>
    <property type="match status" value="1"/>
</dbReference>
<dbReference type="SUPFAM" id="SSF141259">
    <property type="entry name" value="CarD-like"/>
    <property type="match status" value="1"/>
</dbReference>
<dbReference type="SUPFAM" id="SSF52540">
    <property type="entry name" value="P-loop containing nucleoside triphosphate hydrolases"/>
    <property type="match status" value="4"/>
</dbReference>
<dbReference type="SUPFAM" id="SSF143517">
    <property type="entry name" value="TRCF domain-like"/>
    <property type="match status" value="1"/>
</dbReference>
<dbReference type="PROSITE" id="PS51192">
    <property type="entry name" value="HELICASE_ATP_BIND_1"/>
    <property type="match status" value="1"/>
</dbReference>
<dbReference type="PROSITE" id="PS51194">
    <property type="entry name" value="HELICASE_CTER"/>
    <property type="match status" value="1"/>
</dbReference>
<accession>Q6GJG8</accession>
<reference key="1">
    <citation type="journal article" date="2004" name="Proc. Natl. Acad. Sci. U.S.A.">
        <title>Complete genomes of two clinical Staphylococcus aureus strains: evidence for the rapid evolution of virulence and drug resistance.</title>
        <authorList>
            <person name="Holden M.T.G."/>
            <person name="Feil E.J."/>
            <person name="Lindsay J.A."/>
            <person name="Peacock S.J."/>
            <person name="Day N.P.J."/>
            <person name="Enright M.C."/>
            <person name="Foster T.J."/>
            <person name="Moore C.E."/>
            <person name="Hurst L."/>
            <person name="Atkin R."/>
            <person name="Barron A."/>
            <person name="Bason N."/>
            <person name="Bentley S.D."/>
            <person name="Chillingworth C."/>
            <person name="Chillingworth T."/>
            <person name="Churcher C."/>
            <person name="Clark L."/>
            <person name="Corton C."/>
            <person name="Cronin A."/>
            <person name="Doggett J."/>
            <person name="Dowd L."/>
            <person name="Feltwell T."/>
            <person name="Hance Z."/>
            <person name="Harris B."/>
            <person name="Hauser H."/>
            <person name="Holroyd S."/>
            <person name="Jagels K."/>
            <person name="James K.D."/>
            <person name="Lennard N."/>
            <person name="Line A."/>
            <person name="Mayes R."/>
            <person name="Moule S."/>
            <person name="Mungall K."/>
            <person name="Ormond D."/>
            <person name="Quail M.A."/>
            <person name="Rabbinowitsch E."/>
            <person name="Rutherford K.M."/>
            <person name="Sanders M."/>
            <person name="Sharp S."/>
            <person name="Simmonds M."/>
            <person name="Stevens K."/>
            <person name="Whitehead S."/>
            <person name="Barrell B.G."/>
            <person name="Spratt B.G."/>
            <person name="Parkhill J."/>
        </authorList>
    </citation>
    <scope>NUCLEOTIDE SEQUENCE [LARGE SCALE GENOMIC DNA]</scope>
    <source>
        <strain>MRSA252</strain>
    </source>
</reference>
<feature type="chain" id="PRO_0000282669" description="Transcription-repair-coupling factor">
    <location>
        <begin position="1"/>
        <end position="1168"/>
    </location>
</feature>
<feature type="domain" description="Helicase ATP-binding" evidence="1">
    <location>
        <begin position="633"/>
        <end position="794"/>
    </location>
</feature>
<feature type="domain" description="Helicase C-terminal" evidence="1">
    <location>
        <begin position="808"/>
        <end position="969"/>
    </location>
</feature>
<feature type="short sequence motif" description="DEEQ box">
    <location>
        <begin position="747"/>
        <end position="750"/>
    </location>
</feature>
<feature type="binding site" evidence="1">
    <location>
        <begin position="646"/>
        <end position="653"/>
    </location>
    <ligand>
        <name>ATP</name>
        <dbReference type="ChEBI" id="CHEBI:30616"/>
    </ligand>
</feature>
<keyword id="KW-0067">ATP-binding</keyword>
<keyword id="KW-0963">Cytoplasm</keyword>
<keyword id="KW-0227">DNA damage</keyword>
<keyword id="KW-0234">DNA repair</keyword>
<keyword id="KW-0238">DNA-binding</keyword>
<keyword id="KW-0347">Helicase</keyword>
<keyword id="KW-0378">Hydrolase</keyword>
<keyword id="KW-0547">Nucleotide-binding</keyword>
<protein>
    <recommendedName>
        <fullName evidence="1">Transcription-repair-coupling factor</fullName>
        <shortName evidence="1">TRCF</shortName>
        <ecNumber evidence="1">3.6.4.-</ecNumber>
    </recommendedName>
</protein>
<comment type="function">
    <text evidence="1">Couples transcription and DNA repair by recognizing RNA polymerase (RNAP) stalled at DNA lesions. Mediates ATP-dependent release of RNAP and its truncated transcript from the DNA, and recruitment of nucleotide excision repair machinery to the damaged site.</text>
</comment>
<comment type="subcellular location">
    <subcellularLocation>
        <location evidence="1">Cytoplasm</location>
    </subcellularLocation>
</comment>
<comment type="similarity">
    <text evidence="1">In the N-terminal section; belongs to the UvrB family.</text>
</comment>
<comment type="similarity">
    <text evidence="1">In the C-terminal section; belongs to the helicase family. RecG subfamily.</text>
</comment>
<evidence type="ECO:0000255" key="1">
    <source>
        <dbReference type="HAMAP-Rule" id="MF_00969"/>
    </source>
</evidence>